<evidence type="ECO:0000250" key="1"/>
<evidence type="ECO:0000255" key="2">
    <source>
        <dbReference type="PROSITE-ProRule" id="PRU00381"/>
    </source>
</evidence>
<organism>
    <name type="scientific">Lemur catta</name>
    <name type="common">Ring-tailed lemur</name>
    <dbReference type="NCBI Taxonomy" id="9447"/>
    <lineage>
        <taxon>Eukaryota</taxon>
        <taxon>Metazoa</taxon>
        <taxon>Chordata</taxon>
        <taxon>Craniata</taxon>
        <taxon>Vertebrata</taxon>
        <taxon>Euteleostomi</taxon>
        <taxon>Mammalia</taxon>
        <taxon>Eutheria</taxon>
        <taxon>Euarchontoglires</taxon>
        <taxon>Primates</taxon>
        <taxon>Strepsirrhini</taxon>
        <taxon>Lemuriformes</taxon>
        <taxon>Lemuridae</taxon>
        <taxon>Lemur</taxon>
    </lineage>
</organism>
<comment type="function">
    <text evidence="1">Transcription factor required for normal development of thymus, parathyroid glands, ultimobranchial bodies, teeth, skeletal elements of skull and larynx as well as distal limbs.</text>
</comment>
<comment type="subunit">
    <text evidence="1">Interacts with KDM5B.</text>
</comment>
<comment type="subcellular location">
    <subcellularLocation>
        <location>Nucleus</location>
    </subcellularLocation>
</comment>
<dbReference type="EMBL" id="DQ067537">
    <property type="protein sequence ID" value="AAZ39864.1"/>
    <property type="molecule type" value="Genomic_DNA"/>
</dbReference>
<dbReference type="EMBL" id="DQ067535">
    <property type="protein sequence ID" value="AAZ39864.1"/>
    <property type="status" value="JOINED"/>
    <property type="molecule type" value="Genomic_DNA"/>
</dbReference>
<dbReference type="EMBL" id="DQ067536">
    <property type="protein sequence ID" value="AAZ39864.1"/>
    <property type="status" value="JOINED"/>
    <property type="molecule type" value="Genomic_DNA"/>
</dbReference>
<dbReference type="SMR" id="Q2VL52"/>
<dbReference type="GO" id="GO:0005634">
    <property type="term" value="C:nucleus"/>
    <property type="evidence" value="ECO:0007669"/>
    <property type="project" value="UniProtKB-SubCell"/>
</dbReference>
<dbReference type="GO" id="GO:0000981">
    <property type="term" value="F:DNA-binding transcription factor activity, RNA polymerase II-specific"/>
    <property type="evidence" value="ECO:0007669"/>
    <property type="project" value="TreeGrafter"/>
</dbReference>
<dbReference type="GO" id="GO:0000978">
    <property type="term" value="F:RNA polymerase II cis-regulatory region sequence-specific DNA binding"/>
    <property type="evidence" value="ECO:0007669"/>
    <property type="project" value="TreeGrafter"/>
</dbReference>
<dbReference type="CDD" id="cd00131">
    <property type="entry name" value="PAX"/>
    <property type="match status" value="1"/>
</dbReference>
<dbReference type="FunFam" id="1.10.10.10:FF:000003">
    <property type="entry name" value="Paired box protein Pax-6"/>
    <property type="match status" value="1"/>
</dbReference>
<dbReference type="FunFam" id="1.10.10.10:FF:000084">
    <property type="entry name" value="paired box protein Pax-9"/>
    <property type="match status" value="1"/>
</dbReference>
<dbReference type="Gene3D" id="1.10.10.10">
    <property type="entry name" value="Winged helix-like DNA-binding domain superfamily/Winged helix DNA-binding domain"/>
    <property type="match status" value="2"/>
</dbReference>
<dbReference type="InterPro" id="IPR009057">
    <property type="entry name" value="Homeodomain-like_sf"/>
</dbReference>
<dbReference type="InterPro" id="IPR043182">
    <property type="entry name" value="PAIRED_DNA-bd_dom"/>
</dbReference>
<dbReference type="InterPro" id="IPR001523">
    <property type="entry name" value="Paired_dom"/>
</dbReference>
<dbReference type="InterPro" id="IPR043565">
    <property type="entry name" value="PAX_fam"/>
</dbReference>
<dbReference type="InterPro" id="IPR036388">
    <property type="entry name" value="WH-like_DNA-bd_sf"/>
</dbReference>
<dbReference type="PANTHER" id="PTHR45636">
    <property type="entry name" value="PAIRED BOX PROTEIN PAX-6-RELATED-RELATED"/>
    <property type="match status" value="1"/>
</dbReference>
<dbReference type="PANTHER" id="PTHR45636:SF13">
    <property type="entry name" value="PAIRED BOX PROTEIN PAX-9"/>
    <property type="match status" value="1"/>
</dbReference>
<dbReference type="Pfam" id="PF00292">
    <property type="entry name" value="PAX"/>
    <property type="match status" value="1"/>
</dbReference>
<dbReference type="PRINTS" id="PR00027">
    <property type="entry name" value="PAIREDBOX"/>
</dbReference>
<dbReference type="SMART" id="SM00351">
    <property type="entry name" value="PAX"/>
    <property type="match status" value="1"/>
</dbReference>
<dbReference type="SUPFAM" id="SSF46689">
    <property type="entry name" value="Homeodomain-like"/>
    <property type="match status" value="1"/>
</dbReference>
<dbReference type="PROSITE" id="PS00034">
    <property type="entry name" value="PAIRED_1"/>
    <property type="match status" value="1"/>
</dbReference>
<dbReference type="PROSITE" id="PS51057">
    <property type="entry name" value="PAIRED_2"/>
    <property type="match status" value="1"/>
</dbReference>
<proteinExistence type="inferred from homology"/>
<name>PAX9_LEMCA</name>
<protein>
    <recommendedName>
        <fullName>Paired box protein Pax-9</fullName>
    </recommendedName>
</protein>
<accession>Q2VL52</accession>
<keyword id="KW-0217">Developmental protein</keyword>
<keyword id="KW-0238">DNA-binding</keyword>
<keyword id="KW-0539">Nucleus</keyword>
<keyword id="KW-0563">Paired box</keyword>
<keyword id="KW-0804">Transcription</keyword>
<keyword id="KW-0805">Transcription regulation</keyword>
<gene>
    <name type="primary">PAX9</name>
</gene>
<reference key="1">
    <citation type="journal article" date="2006" name="Mol. Biol. Evol.">
        <title>Molecular evolution of the primate developmental genes MSX1 and PAX9.</title>
        <authorList>
            <person name="Perry G.H."/>
            <person name="Verrelli B.C."/>
            <person name="Stone A.C."/>
        </authorList>
    </citation>
    <scope>NUCLEOTIDE SEQUENCE [GENOMIC DNA]</scope>
    <source>
        <strain>Isolate 6621</strain>
    </source>
</reference>
<sequence length="341" mass="36320">MEPAFGEVNQLGGVFVNGRPLPNAIRLRIVELAQLGIRPCDISRQLRVSHGCVSKILARYNETGSILPGAIGGSKPRVTTPTVVKHIRTYKQRDPGIFAWEIRDRLLADGVCDKYNVPSVSSISRILRNKIGNLAQQGHYDSYKQHQPAPQPALPYNHIYSYPSPITAAAAKVPTPPGVPAIPGSVAMPRTWPSSHSVTDILGIRSITDQVSDSSPYHSPKVEEWSSLGRNNFPAAAPHAVNGLEKGALEQEAKYGQAPNGLPAVSSFVSASSMAPYPTPAQVSPYMTYSAAPSGYVAGHGWQHAGGTPLSPHNCDIPASLAFKGMQAAREGSHSVTASAL</sequence>
<feature type="chain" id="PRO_0000050204" description="Paired box protein Pax-9">
    <location>
        <begin position="1"/>
        <end position="341"/>
    </location>
</feature>
<feature type="DNA-binding region" description="Paired" evidence="2">
    <location>
        <begin position="4"/>
        <end position="130"/>
    </location>
</feature>
<feature type="region of interest" description="PAI subdomain" evidence="2">
    <location>
        <begin position="7"/>
        <end position="63"/>
    </location>
</feature>
<feature type="region of interest" description="RED subdomain" evidence="2">
    <location>
        <begin position="82"/>
        <end position="130"/>
    </location>
</feature>
<feature type="region of interest" description="Interaction with KDM5B" evidence="1">
    <location>
        <begin position="168"/>
        <end position="189"/>
    </location>
</feature>